<organism>
    <name type="scientific">Staphylococcus aureus (strain NCTC 8325 / PS 47)</name>
    <dbReference type="NCBI Taxonomy" id="93061"/>
    <lineage>
        <taxon>Bacteria</taxon>
        <taxon>Bacillati</taxon>
        <taxon>Bacillota</taxon>
        <taxon>Bacilli</taxon>
        <taxon>Bacillales</taxon>
        <taxon>Staphylococcaceae</taxon>
        <taxon>Staphylococcus</taxon>
    </lineage>
</organism>
<dbReference type="EC" id="4.2.1.33" evidence="1"/>
<dbReference type="EMBL" id="CP000253">
    <property type="protein sequence ID" value="ABD31326.1"/>
    <property type="molecule type" value="Genomic_DNA"/>
</dbReference>
<dbReference type="RefSeq" id="WP_000718955.1">
    <property type="nucleotide sequence ID" value="NZ_LS483365.1"/>
</dbReference>
<dbReference type="RefSeq" id="YP_500770.1">
    <property type="nucleotide sequence ID" value="NC_007795.1"/>
</dbReference>
<dbReference type="SMR" id="Q2FWK0"/>
<dbReference type="STRING" id="93061.SAOUHSC_02288"/>
<dbReference type="PaxDb" id="1280-SAXN108_2305"/>
<dbReference type="GeneID" id="3919163"/>
<dbReference type="KEGG" id="sao:SAOUHSC_02288"/>
<dbReference type="PATRIC" id="fig|93061.5.peg.2078"/>
<dbReference type="eggNOG" id="COG0066">
    <property type="taxonomic scope" value="Bacteria"/>
</dbReference>
<dbReference type="HOGENOM" id="CLU_081378_0_3_9"/>
<dbReference type="OrthoDB" id="9777465at2"/>
<dbReference type="UniPathway" id="UPA00048">
    <property type="reaction ID" value="UER00071"/>
</dbReference>
<dbReference type="PRO" id="PR:Q2FWK0"/>
<dbReference type="Proteomes" id="UP000008816">
    <property type="component" value="Chromosome"/>
</dbReference>
<dbReference type="GO" id="GO:0009316">
    <property type="term" value="C:3-isopropylmalate dehydratase complex"/>
    <property type="evidence" value="ECO:0007669"/>
    <property type="project" value="InterPro"/>
</dbReference>
<dbReference type="GO" id="GO:0003861">
    <property type="term" value="F:3-isopropylmalate dehydratase activity"/>
    <property type="evidence" value="ECO:0007669"/>
    <property type="project" value="UniProtKB-UniRule"/>
</dbReference>
<dbReference type="GO" id="GO:0009098">
    <property type="term" value="P:L-leucine biosynthetic process"/>
    <property type="evidence" value="ECO:0007669"/>
    <property type="project" value="UniProtKB-UniRule"/>
</dbReference>
<dbReference type="CDD" id="cd01577">
    <property type="entry name" value="IPMI_Swivel"/>
    <property type="match status" value="1"/>
</dbReference>
<dbReference type="FunFam" id="3.20.19.10:FF:000003">
    <property type="entry name" value="3-isopropylmalate dehydratase small subunit"/>
    <property type="match status" value="1"/>
</dbReference>
<dbReference type="Gene3D" id="3.20.19.10">
    <property type="entry name" value="Aconitase, domain 4"/>
    <property type="match status" value="1"/>
</dbReference>
<dbReference type="HAMAP" id="MF_01031">
    <property type="entry name" value="LeuD_type1"/>
    <property type="match status" value="1"/>
</dbReference>
<dbReference type="InterPro" id="IPR004431">
    <property type="entry name" value="3-IsopropMal_deHydase_ssu"/>
</dbReference>
<dbReference type="InterPro" id="IPR015928">
    <property type="entry name" value="Aconitase/3IPM_dehydase_swvl"/>
</dbReference>
<dbReference type="InterPro" id="IPR000573">
    <property type="entry name" value="AconitaseA/IPMdHydase_ssu_swvl"/>
</dbReference>
<dbReference type="InterPro" id="IPR033940">
    <property type="entry name" value="IPMI_Swivel"/>
</dbReference>
<dbReference type="InterPro" id="IPR050075">
    <property type="entry name" value="LeuD"/>
</dbReference>
<dbReference type="NCBIfam" id="TIGR00171">
    <property type="entry name" value="leuD"/>
    <property type="match status" value="1"/>
</dbReference>
<dbReference type="NCBIfam" id="NF002458">
    <property type="entry name" value="PRK01641.1"/>
    <property type="match status" value="1"/>
</dbReference>
<dbReference type="PANTHER" id="PTHR43345:SF5">
    <property type="entry name" value="3-ISOPROPYLMALATE DEHYDRATASE SMALL SUBUNIT"/>
    <property type="match status" value="1"/>
</dbReference>
<dbReference type="PANTHER" id="PTHR43345">
    <property type="entry name" value="3-ISOPROPYLMALATE DEHYDRATASE SMALL SUBUNIT 2-RELATED-RELATED"/>
    <property type="match status" value="1"/>
</dbReference>
<dbReference type="Pfam" id="PF00694">
    <property type="entry name" value="Aconitase_C"/>
    <property type="match status" value="1"/>
</dbReference>
<dbReference type="SUPFAM" id="SSF52016">
    <property type="entry name" value="LeuD/IlvD-like"/>
    <property type="match status" value="1"/>
</dbReference>
<gene>
    <name evidence="1" type="primary">leuD</name>
    <name type="ordered locus">SAOUHSC_02288</name>
</gene>
<comment type="function">
    <text evidence="1">Catalyzes the isomerization between 2-isopropylmalate and 3-isopropylmalate, via the formation of 2-isopropylmaleate.</text>
</comment>
<comment type="catalytic activity">
    <reaction evidence="1">
        <text>(2R,3S)-3-isopropylmalate = (2S)-2-isopropylmalate</text>
        <dbReference type="Rhea" id="RHEA:32287"/>
        <dbReference type="ChEBI" id="CHEBI:1178"/>
        <dbReference type="ChEBI" id="CHEBI:35121"/>
        <dbReference type="EC" id="4.2.1.33"/>
    </reaction>
</comment>
<comment type="pathway">
    <text evidence="1">Amino-acid biosynthesis; L-leucine biosynthesis; L-leucine from 3-methyl-2-oxobutanoate: step 2/4.</text>
</comment>
<comment type="subunit">
    <text evidence="1">Heterodimer of LeuC and LeuD.</text>
</comment>
<comment type="similarity">
    <text evidence="1">Belongs to the LeuD family. LeuD type 1 subfamily.</text>
</comment>
<protein>
    <recommendedName>
        <fullName evidence="1">3-isopropylmalate dehydratase small subunit</fullName>
        <ecNumber evidence="1">4.2.1.33</ecNumber>
    </recommendedName>
    <alternativeName>
        <fullName evidence="1">Alpha-IPM isomerase</fullName>
        <shortName evidence="1">IPMI</shortName>
    </alternativeName>
    <alternativeName>
        <fullName evidence="1">Isopropylmalate isomerase</fullName>
    </alternativeName>
</protein>
<feature type="chain" id="PRO_1000063849" description="3-isopropylmalate dehydratase small subunit">
    <location>
        <begin position="1"/>
        <end position="190"/>
    </location>
</feature>
<proteinExistence type="inferred from homology"/>
<sequence>MAAIKPITTYKGKIVPLFNDNIDTDQIIPKVHLKRISKSGFGPFAFDEWRYLPDGSDNPDFNPNKPQYKGASILITGDNFGCGSSREHAAWALKDYGFHIIIAGSFSDIFYMNCTKNAMLPIVLEKSAREHLAQYVEIEVDLPNQTVSSPDKRFHFEIDETWKNKLVNGLDDIAITLQYESLIEKYEKSL</sequence>
<keyword id="KW-0028">Amino-acid biosynthesis</keyword>
<keyword id="KW-0100">Branched-chain amino acid biosynthesis</keyword>
<keyword id="KW-0432">Leucine biosynthesis</keyword>
<keyword id="KW-0456">Lyase</keyword>
<keyword id="KW-1185">Reference proteome</keyword>
<evidence type="ECO:0000255" key="1">
    <source>
        <dbReference type="HAMAP-Rule" id="MF_01031"/>
    </source>
</evidence>
<accession>Q2FWK0</accession>
<name>LEUD_STAA8</name>
<reference key="1">
    <citation type="book" date="2006" name="Gram positive pathogens, 2nd edition">
        <title>The Staphylococcus aureus NCTC 8325 genome.</title>
        <editorList>
            <person name="Fischetti V."/>
            <person name="Novick R."/>
            <person name="Ferretti J."/>
            <person name="Portnoy D."/>
            <person name="Rood J."/>
        </editorList>
        <authorList>
            <person name="Gillaspy A.F."/>
            <person name="Worrell V."/>
            <person name="Orvis J."/>
            <person name="Roe B.A."/>
            <person name="Dyer D.W."/>
            <person name="Iandolo J.J."/>
        </authorList>
    </citation>
    <scope>NUCLEOTIDE SEQUENCE [LARGE SCALE GENOMIC DNA]</scope>
    <source>
        <strain>NCTC 8325 / PS 47</strain>
    </source>
</reference>